<accession>Q55142</accession>
<organism>
    <name type="scientific">Synechocystis sp. (strain ATCC 27184 / PCC 6803 / Kazusa)</name>
    <dbReference type="NCBI Taxonomy" id="1111708"/>
    <lineage>
        <taxon>Bacteria</taxon>
        <taxon>Bacillati</taxon>
        <taxon>Cyanobacteriota</taxon>
        <taxon>Cyanophyceae</taxon>
        <taxon>Synechococcales</taxon>
        <taxon>Merismopediaceae</taxon>
        <taxon>Synechocystis</taxon>
    </lineage>
</organism>
<evidence type="ECO:0000255" key="1">
    <source>
        <dbReference type="HAMAP-Rule" id="MF_00009"/>
    </source>
</evidence>
<reference key="1">
    <citation type="journal article" date="1995" name="DNA Res.">
        <title>Sequence analysis of the genome of the unicellular cyanobacterium Synechocystis sp. strain PCC6803. I. Sequence features in the 1 Mb region from map positions 64% to 92% of the genome.</title>
        <authorList>
            <person name="Kaneko T."/>
            <person name="Tanaka A."/>
            <person name="Sato S."/>
            <person name="Kotani H."/>
            <person name="Sazuka T."/>
            <person name="Miyajima N."/>
            <person name="Sugiura M."/>
            <person name="Tabata S."/>
        </authorList>
    </citation>
    <scope>NUCLEOTIDE SEQUENCE [LARGE SCALE GENOMIC DNA]</scope>
    <source>
        <strain>ATCC 27184 / PCC 6803 / N-1</strain>
    </source>
</reference>
<reference key="2">
    <citation type="journal article" date="1996" name="DNA Res.">
        <title>Sequence analysis of the genome of the unicellular cyanobacterium Synechocystis sp. strain PCC6803. II. Sequence determination of the entire genome and assignment of potential protein-coding regions.</title>
        <authorList>
            <person name="Kaneko T."/>
            <person name="Sato S."/>
            <person name="Kotani H."/>
            <person name="Tanaka A."/>
            <person name="Asamizu E."/>
            <person name="Nakamura Y."/>
            <person name="Miyajima N."/>
            <person name="Hirosawa M."/>
            <person name="Sugiura M."/>
            <person name="Sasamoto S."/>
            <person name="Kimura T."/>
            <person name="Hosouchi T."/>
            <person name="Matsuno A."/>
            <person name="Muraki A."/>
            <person name="Nakazaki N."/>
            <person name="Naruo K."/>
            <person name="Okumura S."/>
            <person name="Shimpo S."/>
            <person name="Takeuchi C."/>
            <person name="Wada T."/>
            <person name="Watanabe A."/>
            <person name="Yamada M."/>
            <person name="Yasuda M."/>
            <person name="Tabata S."/>
        </authorList>
    </citation>
    <scope>NUCLEOTIDE SEQUENCE [LARGE SCALE GENOMIC DNA]</scope>
    <source>
        <strain>ATCC 27184 / PCC 6803 / Kazusa</strain>
    </source>
</reference>
<dbReference type="EC" id="3.1.-.-" evidence="1"/>
<dbReference type="EMBL" id="BA000022">
    <property type="protein sequence ID" value="BAA10278.1"/>
    <property type="molecule type" value="Genomic_DNA"/>
</dbReference>
<dbReference type="PIR" id="S74360">
    <property type="entry name" value="S74360"/>
</dbReference>
<dbReference type="SMR" id="Q55142"/>
<dbReference type="FunCoup" id="Q55142">
    <property type="interactions" value="367"/>
</dbReference>
<dbReference type="IntAct" id="Q55142">
    <property type="interactions" value="1"/>
</dbReference>
<dbReference type="STRING" id="1148.gene:10499777"/>
<dbReference type="PaxDb" id="1148-1001136"/>
<dbReference type="EnsemblBacteria" id="BAA10278">
    <property type="protein sequence ID" value="BAA10278"/>
    <property type="gene ID" value="BAA10278"/>
</dbReference>
<dbReference type="KEGG" id="syn:slr0053"/>
<dbReference type="eggNOG" id="COG0319">
    <property type="taxonomic scope" value="Bacteria"/>
</dbReference>
<dbReference type="InParanoid" id="Q55142"/>
<dbReference type="PhylomeDB" id="Q55142"/>
<dbReference type="Proteomes" id="UP000001425">
    <property type="component" value="Chromosome"/>
</dbReference>
<dbReference type="GO" id="GO:0005737">
    <property type="term" value="C:cytoplasm"/>
    <property type="evidence" value="ECO:0007669"/>
    <property type="project" value="UniProtKB-SubCell"/>
</dbReference>
<dbReference type="GO" id="GO:0004222">
    <property type="term" value="F:metalloendopeptidase activity"/>
    <property type="evidence" value="ECO:0007669"/>
    <property type="project" value="InterPro"/>
</dbReference>
<dbReference type="GO" id="GO:0004521">
    <property type="term" value="F:RNA endonuclease activity"/>
    <property type="evidence" value="ECO:0007669"/>
    <property type="project" value="UniProtKB-UniRule"/>
</dbReference>
<dbReference type="GO" id="GO:0008270">
    <property type="term" value="F:zinc ion binding"/>
    <property type="evidence" value="ECO:0007669"/>
    <property type="project" value="UniProtKB-UniRule"/>
</dbReference>
<dbReference type="GO" id="GO:0006364">
    <property type="term" value="P:rRNA processing"/>
    <property type="evidence" value="ECO:0007669"/>
    <property type="project" value="UniProtKB-UniRule"/>
</dbReference>
<dbReference type="Gene3D" id="3.40.390.30">
    <property type="entry name" value="Metalloproteases ('zincins'), catalytic domain"/>
    <property type="match status" value="1"/>
</dbReference>
<dbReference type="HAMAP" id="MF_00009">
    <property type="entry name" value="Endoribonucl_YbeY"/>
    <property type="match status" value="1"/>
</dbReference>
<dbReference type="InterPro" id="IPR023091">
    <property type="entry name" value="MetalPrtase_cat_dom_sf_prd"/>
</dbReference>
<dbReference type="InterPro" id="IPR002036">
    <property type="entry name" value="YbeY"/>
</dbReference>
<dbReference type="InterPro" id="IPR020549">
    <property type="entry name" value="YbeY_CS"/>
</dbReference>
<dbReference type="NCBIfam" id="TIGR00043">
    <property type="entry name" value="rRNA maturation RNase YbeY"/>
    <property type="match status" value="1"/>
</dbReference>
<dbReference type="PANTHER" id="PTHR46986">
    <property type="entry name" value="ENDORIBONUCLEASE YBEY, CHLOROPLASTIC"/>
    <property type="match status" value="1"/>
</dbReference>
<dbReference type="PANTHER" id="PTHR46986:SF1">
    <property type="entry name" value="ENDORIBONUCLEASE YBEY, CHLOROPLASTIC"/>
    <property type="match status" value="1"/>
</dbReference>
<dbReference type="Pfam" id="PF02130">
    <property type="entry name" value="YbeY"/>
    <property type="match status" value="1"/>
</dbReference>
<dbReference type="SUPFAM" id="SSF55486">
    <property type="entry name" value="Metalloproteases ('zincins'), catalytic domain"/>
    <property type="match status" value="1"/>
</dbReference>
<dbReference type="PROSITE" id="PS01306">
    <property type="entry name" value="UPF0054"/>
    <property type="match status" value="1"/>
</dbReference>
<feature type="chain" id="PRO_0000102552" description="Endoribonuclease YbeY">
    <location>
        <begin position="1"/>
        <end position="179"/>
    </location>
</feature>
<feature type="binding site" evidence="1">
    <location>
        <position position="141"/>
    </location>
    <ligand>
        <name>Zn(2+)</name>
        <dbReference type="ChEBI" id="CHEBI:29105"/>
        <note>catalytic</note>
    </ligand>
</feature>
<feature type="binding site" evidence="1">
    <location>
        <position position="145"/>
    </location>
    <ligand>
        <name>Zn(2+)</name>
        <dbReference type="ChEBI" id="CHEBI:29105"/>
        <note>catalytic</note>
    </ligand>
</feature>
<feature type="binding site" evidence="1">
    <location>
        <position position="151"/>
    </location>
    <ligand>
        <name>Zn(2+)</name>
        <dbReference type="ChEBI" id="CHEBI:29105"/>
        <note>catalytic</note>
    </ligand>
</feature>
<proteinExistence type="inferred from homology"/>
<comment type="function">
    <text evidence="1">Single strand-specific metallo-endoribonuclease involved in late-stage 70S ribosome quality control and in maturation of the 3' terminus of the 16S rRNA.</text>
</comment>
<comment type="cofactor">
    <cofactor evidence="1">
        <name>Zn(2+)</name>
        <dbReference type="ChEBI" id="CHEBI:29105"/>
    </cofactor>
    <text evidence="1">Binds 1 zinc ion.</text>
</comment>
<comment type="subcellular location">
    <subcellularLocation>
        <location evidence="1">Cytoplasm</location>
    </subcellularLocation>
</comment>
<comment type="similarity">
    <text evidence="1">Belongs to the endoribonuclease YbeY family.</text>
</comment>
<name>YBEY_SYNY3</name>
<sequence>MAPTSVNKIAVELSLQTDLTGSAMASSGVEELLTNPWQGWCQRWLEYLADCLPPASSYELTLLFTGDRRIQELNRKFRHQDKPTDVLAFAALEGDFPLIESEETEEPLYLGDIVISLERADHQARERGHSAKLEVVWLTAHGLLHLLGWDHPDEASLTTMLSEQSHLLTLIGQNPPLFT</sequence>
<protein>
    <recommendedName>
        <fullName evidence="1">Endoribonuclease YbeY</fullName>
        <ecNumber evidence="1">3.1.-.-</ecNumber>
    </recommendedName>
</protein>
<keyword id="KW-0963">Cytoplasm</keyword>
<keyword id="KW-0255">Endonuclease</keyword>
<keyword id="KW-0378">Hydrolase</keyword>
<keyword id="KW-0479">Metal-binding</keyword>
<keyword id="KW-0540">Nuclease</keyword>
<keyword id="KW-1185">Reference proteome</keyword>
<keyword id="KW-0690">Ribosome biogenesis</keyword>
<keyword id="KW-0698">rRNA processing</keyword>
<keyword id="KW-0862">Zinc</keyword>
<gene>
    <name evidence="1" type="primary">ybeY</name>
    <name type="ordered locus">slr0053</name>
</gene>